<comment type="function">
    <text evidence="1">Attaches a formyl group to the free amino group of methionyl-tRNA(fMet). The formyl group appears to play a dual role in the initiator identity of N-formylmethionyl-tRNA by promoting its recognition by IF2 and preventing the misappropriation of this tRNA by the elongation apparatus.</text>
</comment>
<comment type="catalytic activity">
    <reaction evidence="1">
        <text>L-methionyl-tRNA(fMet) + (6R)-10-formyltetrahydrofolate = N-formyl-L-methionyl-tRNA(fMet) + (6S)-5,6,7,8-tetrahydrofolate + H(+)</text>
        <dbReference type="Rhea" id="RHEA:24380"/>
        <dbReference type="Rhea" id="RHEA-COMP:9952"/>
        <dbReference type="Rhea" id="RHEA-COMP:9953"/>
        <dbReference type="ChEBI" id="CHEBI:15378"/>
        <dbReference type="ChEBI" id="CHEBI:57453"/>
        <dbReference type="ChEBI" id="CHEBI:78530"/>
        <dbReference type="ChEBI" id="CHEBI:78844"/>
        <dbReference type="ChEBI" id="CHEBI:195366"/>
        <dbReference type="EC" id="2.1.2.9"/>
    </reaction>
</comment>
<comment type="similarity">
    <text evidence="1">Belongs to the Fmt family.</text>
</comment>
<organism>
    <name type="scientific">Prochlorococcus marinus (strain MIT 9312)</name>
    <dbReference type="NCBI Taxonomy" id="74546"/>
    <lineage>
        <taxon>Bacteria</taxon>
        <taxon>Bacillati</taxon>
        <taxon>Cyanobacteriota</taxon>
        <taxon>Cyanophyceae</taxon>
        <taxon>Synechococcales</taxon>
        <taxon>Prochlorococcaceae</taxon>
        <taxon>Prochlorococcus</taxon>
    </lineage>
</organism>
<accession>Q31AS6</accession>
<reference key="1">
    <citation type="journal article" date="2006" name="Science">
        <title>Genomic islands and the ecology and evolution of Prochlorococcus.</title>
        <authorList>
            <person name="Coleman M.L."/>
            <person name="Sullivan M.B."/>
            <person name="Martiny A.C."/>
            <person name="Steglich C."/>
            <person name="Barry K."/>
            <person name="Delong E.F."/>
            <person name="Chisholm S.W."/>
        </authorList>
    </citation>
    <scope>NUCLEOTIDE SEQUENCE [LARGE SCALE GENOMIC DNA]</scope>
    <source>
        <strain>MIT 9312</strain>
    </source>
</reference>
<evidence type="ECO:0000255" key="1">
    <source>
        <dbReference type="HAMAP-Rule" id="MF_00182"/>
    </source>
</evidence>
<protein>
    <recommendedName>
        <fullName evidence="1">Methionyl-tRNA formyltransferase</fullName>
        <ecNumber evidence="1">2.1.2.9</ecNumber>
    </recommendedName>
</protein>
<keyword id="KW-0648">Protein biosynthesis</keyword>
<keyword id="KW-0808">Transferase</keyword>
<sequence length="328" mass="37226">MRIIFWGTPEYSISSLDIFIKSKHEVIAVVSQPDKKRSRGKKLISSPVKSFAEQESIKIYTPEKIRDNINFINELKSLSCDLFIVIAYGKILPKEILEIPKFGCWNAHASLLPRWRGAAPIQWSLMKGDEFTGVGIMKMNEGLDTGDLLLEEKIKIDNNDNLITLTEKLSILSAKLFLNATSLLEENINKNTNYQLTKQNTLGREITYARMIEKSDYKVDWGNEAIKISRKIKALYPRANTTFRGKNLKIIKIKVLSSDEINNEKYCLMSNYSKPGIILAVLENEGIIISTKTDPIILLEAKLEGKNISSKKQLIQQLKPSLGEYLSN</sequence>
<dbReference type="EC" id="2.1.2.9" evidence="1"/>
<dbReference type="EMBL" id="CP000111">
    <property type="protein sequence ID" value="ABB50019.1"/>
    <property type="molecule type" value="Genomic_DNA"/>
</dbReference>
<dbReference type="RefSeq" id="WP_011376511.1">
    <property type="nucleotide sequence ID" value="NC_007577.1"/>
</dbReference>
<dbReference type="SMR" id="Q31AS6"/>
<dbReference type="STRING" id="74546.PMT9312_0959"/>
<dbReference type="KEGG" id="pmi:PMT9312_0959"/>
<dbReference type="eggNOG" id="COG0223">
    <property type="taxonomic scope" value="Bacteria"/>
</dbReference>
<dbReference type="HOGENOM" id="CLU_033347_1_1_3"/>
<dbReference type="OrthoDB" id="9802815at2"/>
<dbReference type="Proteomes" id="UP000002715">
    <property type="component" value="Chromosome"/>
</dbReference>
<dbReference type="GO" id="GO:0005829">
    <property type="term" value="C:cytosol"/>
    <property type="evidence" value="ECO:0007669"/>
    <property type="project" value="TreeGrafter"/>
</dbReference>
<dbReference type="GO" id="GO:0004479">
    <property type="term" value="F:methionyl-tRNA formyltransferase activity"/>
    <property type="evidence" value="ECO:0007669"/>
    <property type="project" value="UniProtKB-UniRule"/>
</dbReference>
<dbReference type="CDD" id="cd08646">
    <property type="entry name" value="FMT_core_Met-tRNA-FMT_N"/>
    <property type="match status" value="1"/>
</dbReference>
<dbReference type="CDD" id="cd08704">
    <property type="entry name" value="Met_tRNA_FMT_C"/>
    <property type="match status" value="1"/>
</dbReference>
<dbReference type="Gene3D" id="3.40.50.12230">
    <property type="match status" value="1"/>
</dbReference>
<dbReference type="HAMAP" id="MF_00182">
    <property type="entry name" value="Formyl_trans"/>
    <property type="match status" value="1"/>
</dbReference>
<dbReference type="InterPro" id="IPR005794">
    <property type="entry name" value="Fmt"/>
</dbReference>
<dbReference type="InterPro" id="IPR005793">
    <property type="entry name" value="Formyl_trans_C"/>
</dbReference>
<dbReference type="InterPro" id="IPR002376">
    <property type="entry name" value="Formyl_transf_N"/>
</dbReference>
<dbReference type="InterPro" id="IPR036477">
    <property type="entry name" value="Formyl_transf_N_sf"/>
</dbReference>
<dbReference type="InterPro" id="IPR011034">
    <property type="entry name" value="Formyl_transferase-like_C_sf"/>
</dbReference>
<dbReference type="InterPro" id="IPR044135">
    <property type="entry name" value="Met-tRNA-FMT_C"/>
</dbReference>
<dbReference type="InterPro" id="IPR041711">
    <property type="entry name" value="Met-tRNA-FMT_N"/>
</dbReference>
<dbReference type="NCBIfam" id="TIGR00460">
    <property type="entry name" value="fmt"/>
    <property type="match status" value="1"/>
</dbReference>
<dbReference type="PANTHER" id="PTHR11138">
    <property type="entry name" value="METHIONYL-TRNA FORMYLTRANSFERASE"/>
    <property type="match status" value="1"/>
</dbReference>
<dbReference type="PANTHER" id="PTHR11138:SF5">
    <property type="entry name" value="METHIONYL-TRNA FORMYLTRANSFERASE, MITOCHONDRIAL"/>
    <property type="match status" value="1"/>
</dbReference>
<dbReference type="Pfam" id="PF02911">
    <property type="entry name" value="Formyl_trans_C"/>
    <property type="match status" value="1"/>
</dbReference>
<dbReference type="Pfam" id="PF00551">
    <property type="entry name" value="Formyl_trans_N"/>
    <property type="match status" value="1"/>
</dbReference>
<dbReference type="SUPFAM" id="SSF50486">
    <property type="entry name" value="FMT C-terminal domain-like"/>
    <property type="match status" value="1"/>
</dbReference>
<dbReference type="SUPFAM" id="SSF53328">
    <property type="entry name" value="Formyltransferase"/>
    <property type="match status" value="1"/>
</dbReference>
<gene>
    <name evidence="1" type="primary">fmt</name>
    <name type="ordered locus">PMT9312_0959</name>
</gene>
<name>FMT_PROM9</name>
<feature type="chain" id="PRO_1000020125" description="Methionyl-tRNA formyltransferase">
    <location>
        <begin position="1"/>
        <end position="328"/>
    </location>
</feature>
<feature type="binding site" evidence="1">
    <location>
        <begin position="110"/>
        <end position="113"/>
    </location>
    <ligand>
        <name>(6S)-5,6,7,8-tetrahydrofolate</name>
        <dbReference type="ChEBI" id="CHEBI:57453"/>
    </ligand>
</feature>
<proteinExistence type="inferred from homology"/>